<gene>
    <name type="primary">CYP2A13</name>
</gene>
<dbReference type="EC" id="1.14.14.1"/>
<dbReference type="EMBL" id="U22028">
    <property type="protein sequence ID" value="AAB40519.1"/>
    <property type="molecule type" value="Genomic_DNA"/>
</dbReference>
<dbReference type="EMBL" id="AF209774">
    <property type="protein sequence ID" value="AAG35775.1"/>
    <property type="molecule type" value="mRNA"/>
</dbReference>
<dbReference type="EMBL" id="AY513604">
    <property type="protein sequence ID" value="AAR90935.1"/>
    <property type="molecule type" value="mRNA"/>
</dbReference>
<dbReference type="EMBL" id="AY513605">
    <property type="protein sequence ID" value="AAR90936.1"/>
    <property type="molecule type" value="mRNA"/>
</dbReference>
<dbReference type="EMBL" id="AY513606">
    <property type="protein sequence ID" value="AAR90937.1"/>
    <property type="molecule type" value="mRNA"/>
</dbReference>
<dbReference type="EMBL" id="AY513608">
    <property type="protein sequence ID" value="AAR90939.1"/>
    <property type="molecule type" value="mRNA"/>
</dbReference>
<dbReference type="EMBL" id="AY513609">
    <property type="protein sequence ID" value="AAR90940.1"/>
    <property type="molecule type" value="mRNA"/>
</dbReference>
<dbReference type="CCDS" id="CCDS12571.1"/>
<dbReference type="PIR" id="I38966">
    <property type="entry name" value="I38966"/>
</dbReference>
<dbReference type="RefSeq" id="NP_000757.2">
    <property type="nucleotide sequence ID" value="NM_000766.4"/>
</dbReference>
<dbReference type="PDB" id="2P85">
    <property type="method" value="X-ray"/>
    <property type="resolution" value="2.35 A"/>
    <property type="chains" value="A/B/C/D/E/F=26-494"/>
</dbReference>
<dbReference type="PDB" id="2PG5">
    <property type="method" value="X-ray"/>
    <property type="resolution" value="1.95 A"/>
    <property type="chains" value="A/B/C/D=31-494"/>
</dbReference>
<dbReference type="PDB" id="2PG6">
    <property type="method" value="X-ray"/>
    <property type="resolution" value="2.53 A"/>
    <property type="chains" value="A/B/C/D=31-494"/>
</dbReference>
<dbReference type="PDB" id="2PG7">
    <property type="method" value="X-ray"/>
    <property type="resolution" value="2.80 A"/>
    <property type="chains" value="A/B/C/D=31-494"/>
</dbReference>
<dbReference type="PDB" id="3T3S">
    <property type="method" value="X-ray"/>
    <property type="resolution" value="3.00 A"/>
    <property type="chains" value="A/B/C/D/E/F/G/H=31-494"/>
</dbReference>
<dbReference type="PDB" id="4EJG">
    <property type="method" value="X-ray"/>
    <property type="resolution" value="2.50 A"/>
    <property type="chains" value="A/B/C/D/E/F/G/H=31-494"/>
</dbReference>
<dbReference type="PDB" id="4EJH">
    <property type="method" value="X-ray"/>
    <property type="resolution" value="2.35 A"/>
    <property type="chains" value="A/B/C/D/E/F/G/H=31-494"/>
</dbReference>
<dbReference type="PDB" id="4EJI">
    <property type="method" value="X-ray"/>
    <property type="resolution" value="2.10 A"/>
    <property type="chains" value="A=31-494"/>
</dbReference>
<dbReference type="PDBsum" id="2P85"/>
<dbReference type="PDBsum" id="2PG5"/>
<dbReference type="PDBsum" id="2PG6"/>
<dbReference type="PDBsum" id="2PG7"/>
<dbReference type="PDBsum" id="3T3S"/>
<dbReference type="PDBsum" id="4EJG"/>
<dbReference type="PDBsum" id="4EJH"/>
<dbReference type="PDBsum" id="4EJI"/>
<dbReference type="SMR" id="Q16696"/>
<dbReference type="BioGRID" id="107931">
    <property type="interactions" value="5"/>
</dbReference>
<dbReference type="FunCoup" id="Q16696">
    <property type="interactions" value="157"/>
</dbReference>
<dbReference type="IntAct" id="Q16696">
    <property type="interactions" value="4"/>
</dbReference>
<dbReference type="STRING" id="9606.ENSP00000332679"/>
<dbReference type="BindingDB" id="Q16696"/>
<dbReference type="ChEMBL" id="CHEMBL3542436"/>
<dbReference type="DrugBank" id="DB00553">
    <property type="generic name" value="Methoxsalen"/>
</dbReference>
<dbReference type="DrugBank" id="DB00184">
    <property type="generic name" value="Nicotine"/>
</dbReference>
<dbReference type="DrugBank" id="DB03783">
    <property type="generic name" value="Phenacetin"/>
</dbReference>
<dbReference type="DrugBank" id="DB00624">
    <property type="generic name" value="Testosterone"/>
</dbReference>
<dbReference type="DrugBank" id="DB13943">
    <property type="generic name" value="Testosterone cypionate"/>
</dbReference>
<dbReference type="DrugBank" id="DB13944">
    <property type="generic name" value="Testosterone enanthate"/>
</dbReference>
<dbReference type="DrugBank" id="DB13946">
    <property type="generic name" value="Testosterone undecanoate"/>
</dbReference>
<dbReference type="GuidetoPHARMACOLOGY" id="1323"/>
<dbReference type="GlyGen" id="Q16696">
    <property type="glycosylation" value="1 site"/>
</dbReference>
<dbReference type="iPTMnet" id="Q16696"/>
<dbReference type="PhosphoSitePlus" id="Q16696"/>
<dbReference type="BioMuta" id="CYP2A13"/>
<dbReference type="DMDM" id="77416854"/>
<dbReference type="MassIVE" id="Q16696"/>
<dbReference type="PaxDb" id="9606-ENSP00000332679"/>
<dbReference type="PeptideAtlas" id="Q16696"/>
<dbReference type="ProteomicsDB" id="61036"/>
<dbReference type="Antibodypedia" id="17121">
    <property type="antibodies" value="179 antibodies from 30 providers"/>
</dbReference>
<dbReference type="DNASU" id="1553"/>
<dbReference type="Ensembl" id="ENST00000330436.4">
    <property type="protein sequence ID" value="ENSP00000332679.1"/>
    <property type="gene ID" value="ENSG00000197838.5"/>
</dbReference>
<dbReference type="GeneID" id="1553"/>
<dbReference type="KEGG" id="hsa:1553"/>
<dbReference type="MANE-Select" id="ENST00000330436.4">
    <property type="protein sequence ID" value="ENSP00000332679.1"/>
    <property type="RefSeq nucleotide sequence ID" value="NM_000766.5"/>
    <property type="RefSeq protein sequence ID" value="NP_000757.2"/>
</dbReference>
<dbReference type="UCSC" id="uc002opt.5">
    <property type="organism name" value="human"/>
</dbReference>
<dbReference type="AGR" id="HGNC:2608"/>
<dbReference type="CTD" id="1553"/>
<dbReference type="DisGeNET" id="1553"/>
<dbReference type="GeneCards" id="CYP2A13"/>
<dbReference type="HGNC" id="HGNC:2608">
    <property type="gene designation" value="CYP2A13"/>
</dbReference>
<dbReference type="HPA" id="ENSG00000197838">
    <property type="expression patterns" value="Tissue enriched (liver)"/>
</dbReference>
<dbReference type="MIM" id="608055">
    <property type="type" value="gene"/>
</dbReference>
<dbReference type="neXtProt" id="NX_Q16696"/>
<dbReference type="OpenTargets" id="ENSG00000197838"/>
<dbReference type="PharmGKB" id="PA27101"/>
<dbReference type="VEuPathDB" id="HostDB:ENSG00000197838"/>
<dbReference type="eggNOG" id="KOG0156">
    <property type="taxonomic scope" value="Eukaryota"/>
</dbReference>
<dbReference type="GeneTree" id="ENSGT00940000154117"/>
<dbReference type="HOGENOM" id="CLU_001570_22_3_1"/>
<dbReference type="InParanoid" id="Q16696"/>
<dbReference type="OMA" id="CREGLPC"/>
<dbReference type="OrthoDB" id="2789670at2759"/>
<dbReference type="PAN-GO" id="Q16696">
    <property type="GO annotations" value="9 GO annotations based on evolutionary models"/>
</dbReference>
<dbReference type="PhylomeDB" id="Q16696"/>
<dbReference type="TreeFam" id="TF352043"/>
<dbReference type="PathwayCommons" id="Q16696"/>
<dbReference type="Reactome" id="R-HSA-211935">
    <property type="pathway name" value="Fatty acids"/>
</dbReference>
<dbReference type="Reactome" id="R-HSA-211981">
    <property type="pathway name" value="Xenobiotics"/>
</dbReference>
<dbReference type="Reactome" id="R-HSA-211999">
    <property type="pathway name" value="CYP2E1 reactions"/>
</dbReference>
<dbReference type="Reactome" id="R-HSA-5423646">
    <property type="pathway name" value="Aflatoxin activation and detoxification"/>
</dbReference>
<dbReference type="SABIO-RK" id="Q16696"/>
<dbReference type="SignaLink" id="Q16696"/>
<dbReference type="BioGRID-ORCS" id="1553">
    <property type="hits" value="164 hits in 1143 CRISPR screens"/>
</dbReference>
<dbReference type="EvolutionaryTrace" id="Q16696"/>
<dbReference type="GeneWiki" id="CYP2A13"/>
<dbReference type="GenomeRNAi" id="1553"/>
<dbReference type="Pharos" id="Q16696">
    <property type="development level" value="Tchem"/>
</dbReference>
<dbReference type="PRO" id="PR:Q16696"/>
<dbReference type="Proteomes" id="UP000005640">
    <property type="component" value="Chromosome 19"/>
</dbReference>
<dbReference type="RNAct" id="Q16696">
    <property type="molecule type" value="protein"/>
</dbReference>
<dbReference type="Bgee" id="ENSG00000197838">
    <property type="expression patterns" value="Expressed in nasal cavity epithelium and 25 other cell types or tissues"/>
</dbReference>
<dbReference type="GO" id="GO:0005737">
    <property type="term" value="C:cytoplasm"/>
    <property type="evidence" value="ECO:0000318"/>
    <property type="project" value="GO_Central"/>
</dbReference>
<dbReference type="GO" id="GO:0005789">
    <property type="term" value="C:endoplasmic reticulum membrane"/>
    <property type="evidence" value="ECO:0000304"/>
    <property type="project" value="Reactome"/>
</dbReference>
<dbReference type="GO" id="GO:0043231">
    <property type="term" value="C:intracellular membrane-bounded organelle"/>
    <property type="evidence" value="ECO:0000318"/>
    <property type="project" value="GO_Central"/>
</dbReference>
<dbReference type="GO" id="GO:0008392">
    <property type="term" value="F:arachidonate epoxygenase activity"/>
    <property type="evidence" value="ECO:0000318"/>
    <property type="project" value="GO_Central"/>
</dbReference>
<dbReference type="GO" id="GO:0008389">
    <property type="term" value="F:coumarin 7-hydroxylase activity"/>
    <property type="evidence" value="ECO:0000304"/>
    <property type="project" value="Reactome"/>
</dbReference>
<dbReference type="GO" id="GO:0020037">
    <property type="term" value="F:heme binding"/>
    <property type="evidence" value="ECO:0000314"/>
    <property type="project" value="UniProtKB"/>
</dbReference>
<dbReference type="GO" id="GO:0005506">
    <property type="term" value="F:iron ion binding"/>
    <property type="evidence" value="ECO:0007669"/>
    <property type="project" value="InterPro"/>
</dbReference>
<dbReference type="GO" id="GO:0004497">
    <property type="term" value="F:monooxygenase activity"/>
    <property type="evidence" value="ECO:0000304"/>
    <property type="project" value="Reactome"/>
</dbReference>
<dbReference type="GO" id="GO:0016712">
    <property type="term" value="F:oxidoreductase activity, acting on paired donors, with incorporation or reduction of molecular oxygen, reduced flavin or flavoprotein as one donor, and incorporation of one atom of oxygen"/>
    <property type="evidence" value="ECO:0000318"/>
    <property type="project" value="GO_Central"/>
</dbReference>
<dbReference type="GO" id="GO:0046222">
    <property type="term" value="P:aflatoxin metabolic process"/>
    <property type="evidence" value="ECO:0000304"/>
    <property type="project" value="Reactome"/>
</dbReference>
<dbReference type="GO" id="GO:0009804">
    <property type="term" value="P:coumarin metabolic process"/>
    <property type="evidence" value="ECO:0000318"/>
    <property type="project" value="GO_Central"/>
</dbReference>
<dbReference type="GO" id="GO:0019373">
    <property type="term" value="P:epoxygenase P450 pathway"/>
    <property type="evidence" value="ECO:0000318"/>
    <property type="project" value="GO_Central"/>
</dbReference>
<dbReference type="GO" id="GO:0006805">
    <property type="term" value="P:xenobiotic metabolic process"/>
    <property type="evidence" value="ECO:0000318"/>
    <property type="project" value="GO_Central"/>
</dbReference>
<dbReference type="CDD" id="cd20668">
    <property type="entry name" value="CYP2A"/>
    <property type="match status" value="1"/>
</dbReference>
<dbReference type="FunFam" id="1.10.630.10:FF:000238">
    <property type="entry name" value="Cytochrome P450 2A6"/>
    <property type="match status" value="1"/>
</dbReference>
<dbReference type="Gene3D" id="1.10.630.10">
    <property type="entry name" value="Cytochrome P450"/>
    <property type="match status" value="1"/>
</dbReference>
<dbReference type="InterPro" id="IPR001128">
    <property type="entry name" value="Cyt_P450"/>
</dbReference>
<dbReference type="InterPro" id="IPR017972">
    <property type="entry name" value="Cyt_P450_CS"/>
</dbReference>
<dbReference type="InterPro" id="IPR002401">
    <property type="entry name" value="Cyt_P450_E_grp-I"/>
</dbReference>
<dbReference type="InterPro" id="IPR008067">
    <property type="entry name" value="Cyt_P450_E_grp-I_CYP2A-like"/>
</dbReference>
<dbReference type="InterPro" id="IPR036396">
    <property type="entry name" value="Cyt_P450_sf"/>
</dbReference>
<dbReference type="InterPro" id="IPR050182">
    <property type="entry name" value="Cytochrome_P450_fam2"/>
</dbReference>
<dbReference type="PANTHER" id="PTHR24300:SF409">
    <property type="entry name" value="CYTOCHROME P450 2A13"/>
    <property type="match status" value="1"/>
</dbReference>
<dbReference type="PANTHER" id="PTHR24300">
    <property type="entry name" value="CYTOCHROME P450 508A4-RELATED"/>
    <property type="match status" value="1"/>
</dbReference>
<dbReference type="Pfam" id="PF00067">
    <property type="entry name" value="p450"/>
    <property type="match status" value="1"/>
</dbReference>
<dbReference type="PRINTS" id="PR00463">
    <property type="entry name" value="EP450I"/>
</dbReference>
<dbReference type="PRINTS" id="PR01684">
    <property type="entry name" value="EP450ICYP2A"/>
</dbReference>
<dbReference type="PRINTS" id="PR00385">
    <property type="entry name" value="P450"/>
</dbReference>
<dbReference type="SUPFAM" id="SSF48264">
    <property type="entry name" value="Cytochrome P450"/>
    <property type="match status" value="1"/>
</dbReference>
<dbReference type="PROSITE" id="PS00086">
    <property type="entry name" value="CYTOCHROME_P450"/>
    <property type="match status" value="1"/>
</dbReference>
<feature type="chain" id="PRO_0000051676" description="Cytochrome P450 2A13">
    <location>
        <begin position="1"/>
        <end position="494"/>
    </location>
</feature>
<feature type="binding site">
    <location>
        <position position="297"/>
    </location>
    <ligand>
        <name>substrate</name>
    </ligand>
</feature>
<feature type="binding site" description="axial binding residue">
    <location>
        <position position="439"/>
    </location>
    <ligand>
        <name>heme</name>
        <dbReference type="ChEBI" id="CHEBI:30413"/>
    </ligand>
    <ligandPart>
        <name>Fe</name>
        <dbReference type="ChEBI" id="CHEBI:18248"/>
    </ligandPart>
</feature>
<feature type="sequence variant" id="VAR_018334" description="In allele CYP2A13*2; dbSNP:rs8192784." evidence="3 5">
    <original>R</original>
    <variation>Q</variation>
    <location>
        <position position="25"/>
    </location>
</feature>
<feature type="sequence variant" id="VAR_018335" description="In allele CYP2A13*4; dbSNP:rs148044792." evidence="5">
    <original>R</original>
    <variation>Q</variation>
    <location>
        <position position="101"/>
    </location>
</feature>
<feature type="sequence variant" id="VAR_018336" description="In allele CYP2A13*3." evidence="5">
    <original>T</original>
    <variation>TT</variation>
    <location>
        <position position="134"/>
    </location>
</feature>
<feature type="sequence variant" id="VAR_018337" description="In allele CYP2A13*3 and allele CYP2A13*8; dbSNP:rs112337232." evidence="4 5">
    <original>D</original>
    <variation>E</variation>
    <location>
        <position position="158"/>
    </location>
</feature>
<feature type="sequence variant" id="VAR_013835" description="In allele CYP2A13*2; dbSNP:rs8192789." evidence="2 3">
    <original>R</original>
    <variation>C</variation>
    <location>
        <position position="257"/>
    </location>
</feature>
<feature type="sequence variant" id="VAR_018356" description="In allele CYP2A13*9." evidence="4">
    <original>V</original>
    <variation>L</variation>
    <location>
        <position position="323"/>
    </location>
</feature>
<feature type="sequence variant" id="VAR_018338" description="In allele CYP2A13*5; dbSNP:rs72547590." evidence="5">
    <original>F</original>
    <variation>Y</variation>
    <location>
        <position position="453"/>
    </location>
</feature>
<feature type="sequence variant" id="VAR_018339" description="In allele CYP2A13*6; dbSNP:rs138870349." evidence="5">
    <original>R</original>
    <variation>C</variation>
    <location>
        <position position="494"/>
    </location>
</feature>
<feature type="mutagenesis site" description="Decreases phenacetin O-deethylation activity 8 fold." evidence="6">
    <original>L</original>
    <variation>V</variation>
    <location>
        <position position="110"/>
    </location>
</feature>
<feature type="mutagenesis site" description="Increases phenacetin O-deethylation activity 5 fold." evidence="6">
    <original>A</original>
    <variation>V</variation>
    <location>
        <position position="117"/>
    </location>
</feature>
<feature type="mutagenesis site" description="Decreases phenacetin O-deethylation activity 10 fold." evidence="6">
    <original>S</original>
    <variation>I</variation>
    <location>
        <position position="208"/>
    </location>
</feature>
<feature type="mutagenesis site" description="Decreases phenacetin O-deethylation activity 2 fold." evidence="6">
    <original>A</original>
    <variation>S</variation>
    <location>
        <position position="213"/>
    </location>
</feature>
<feature type="mutagenesis site" description="Decreases phenacetin O-deethylation activity 40 fold." evidence="6">
    <original>F</original>
    <variation>I</variation>
    <location>
        <position position="300"/>
    </location>
</feature>
<feature type="mutagenesis site" description="Decreases phenacetin O-deethylation activity 20 fold." evidence="6">
    <original>A</original>
    <variation>G</variation>
    <location>
        <position position="301"/>
    </location>
</feature>
<feature type="mutagenesis site" description="Decreases phenacetin O-deethylation activity 7 fold." evidence="6">
    <original>M</original>
    <variation>V</variation>
    <location>
        <position position="365"/>
    </location>
</feature>
<feature type="mutagenesis site" description="Increases phenacetin O-deethylation activity 3 fold." evidence="6">
    <original>L</original>
    <variation>I</variation>
    <location>
        <position position="366"/>
    </location>
</feature>
<feature type="mutagenesis site" description="Decreases phenacetin O-deethylation activity 9 fold." evidence="6">
    <original>G</original>
    <variation>S</variation>
    <location>
        <position position="369"/>
    </location>
</feature>
<feature type="mutagenesis site" description="Decreases phenacetin O-deethylation activity 3 fold." evidence="6">
    <original>H</original>
    <variation>R</variation>
    <location>
        <position position="372"/>
    </location>
</feature>
<feature type="sequence conflict" description="In Ref. 1; AAB40519." evidence="7" ref="1">
    <original>S</original>
    <variation>R</variation>
    <location>
        <position position="208"/>
    </location>
</feature>
<feature type="sequence conflict" description="In Ref. 1; AAB40519." evidence="7" ref="1">
    <original>A</original>
    <variation>G</variation>
    <location>
        <position position="213"/>
    </location>
</feature>
<feature type="sequence conflict" description="In Ref. 1; AAB40519." evidence="7" ref="1">
    <original>V</original>
    <variation>E</variation>
    <location>
        <position position="398"/>
    </location>
</feature>
<feature type="sequence conflict" description="In Ref. 1; AAB40519." evidence="7" ref="1">
    <original>RDFN</original>
    <variation>QDCS</variation>
    <location>
        <begin position="409"/>
        <end position="412"/>
    </location>
</feature>
<feature type="sequence conflict" description="In Ref. 1; AAB40519." evidence="7" ref="1">
    <original>K</original>
    <variation>E</variation>
    <location>
        <position position="419"/>
    </location>
</feature>
<feature type="turn" evidence="9">
    <location>
        <begin position="41"/>
        <end position="43"/>
    </location>
</feature>
<feature type="helix" evidence="9">
    <location>
        <begin position="46"/>
        <end position="48"/>
    </location>
</feature>
<feature type="helix" evidence="8">
    <location>
        <begin position="51"/>
        <end position="53"/>
    </location>
</feature>
<feature type="helix" evidence="9">
    <location>
        <begin position="54"/>
        <end position="65"/>
    </location>
</feature>
<feature type="strand" evidence="9">
    <location>
        <begin position="67"/>
        <end position="73"/>
    </location>
</feature>
<feature type="strand" evidence="9">
    <location>
        <begin position="76"/>
        <end position="81"/>
    </location>
</feature>
<feature type="helix" evidence="9">
    <location>
        <begin position="84"/>
        <end position="91"/>
    </location>
</feature>
<feature type="turn" evidence="9">
    <location>
        <begin position="92"/>
        <end position="98"/>
    </location>
</feature>
<feature type="helix" evidence="9">
    <location>
        <begin position="105"/>
        <end position="111"/>
    </location>
</feature>
<feature type="turn" evidence="9">
    <location>
        <begin position="116"/>
        <end position="118"/>
    </location>
</feature>
<feature type="helix" evidence="9">
    <location>
        <begin position="121"/>
        <end position="137"/>
    </location>
</feature>
<feature type="turn" evidence="9">
    <location>
        <begin position="138"/>
        <end position="141"/>
    </location>
</feature>
<feature type="helix" evidence="9">
    <location>
        <begin position="143"/>
        <end position="161"/>
    </location>
</feature>
<feature type="turn" evidence="9">
    <location>
        <begin position="162"/>
        <end position="165"/>
    </location>
</feature>
<feature type="helix" evidence="9">
    <location>
        <begin position="171"/>
        <end position="187"/>
    </location>
</feature>
<feature type="helix" evidence="9">
    <location>
        <begin position="196"/>
        <end position="212"/>
    </location>
</feature>
<feature type="helix" evidence="9">
    <location>
        <begin position="215"/>
        <end position="227"/>
    </location>
</feature>
<feature type="strand" evidence="9">
    <location>
        <begin position="230"/>
        <end position="232"/>
    </location>
</feature>
<feature type="helix" evidence="9">
    <location>
        <begin position="233"/>
        <end position="256"/>
    </location>
</feature>
<feature type="helix" evidence="9">
    <location>
        <begin position="267"/>
        <end position="277"/>
    </location>
</feature>
<feature type="turn" evidence="9">
    <location>
        <begin position="278"/>
        <end position="280"/>
    </location>
</feature>
<feature type="helix" evidence="9">
    <location>
        <begin position="288"/>
        <end position="319"/>
    </location>
</feature>
<feature type="helix" evidence="9">
    <location>
        <begin position="321"/>
        <end position="334"/>
    </location>
</feature>
<feature type="strand" evidence="9">
    <location>
        <begin position="337"/>
        <end position="339"/>
    </location>
</feature>
<feature type="helix" evidence="9">
    <location>
        <begin position="343"/>
        <end position="348"/>
    </location>
</feature>
<feature type="helix" evidence="9">
    <location>
        <begin position="350"/>
        <end position="363"/>
    </location>
</feature>
<feature type="strand" evidence="9">
    <location>
        <begin position="378"/>
        <end position="380"/>
    </location>
</feature>
<feature type="strand" evidence="9">
    <location>
        <begin position="383"/>
        <end position="385"/>
    </location>
</feature>
<feature type="strand" evidence="9">
    <location>
        <begin position="390"/>
        <end position="393"/>
    </location>
</feature>
<feature type="helix" evidence="9">
    <location>
        <begin position="395"/>
        <end position="399"/>
    </location>
</feature>
<feature type="turn" evidence="9">
    <location>
        <begin position="402"/>
        <end position="404"/>
    </location>
</feature>
<feature type="helix" evidence="9">
    <location>
        <begin position="413"/>
        <end position="416"/>
    </location>
</feature>
<feature type="strand" evidence="10">
    <location>
        <begin position="419"/>
        <end position="421"/>
    </location>
</feature>
<feature type="helix" evidence="9">
    <location>
        <begin position="442"/>
        <end position="459"/>
    </location>
</feature>
<feature type="strand" evidence="9">
    <location>
        <begin position="460"/>
        <end position="466"/>
    </location>
</feature>
<feature type="helix" evidence="9">
    <location>
        <begin position="468"/>
        <end position="470"/>
    </location>
</feature>
<feature type="strand" evidence="9">
    <location>
        <begin position="476"/>
        <end position="483"/>
    </location>
</feature>
<feature type="strand" evidence="9">
    <location>
        <begin position="489"/>
        <end position="493"/>
    </location>
</feature>
<accession>Q16696</accession>
<accession>Q53YR8</accession>
<accession>Q6R569</accession>
<accession>Q6R570</accession>
<accession>Q9H2X2</accession>
<comment type="function">
    <text evidence="6">Exhibits a coumarin 7-hydroxylase activity. Active in the metabolic activation of hexamethylphosphoramide, N,N-dimethylaniline, 2'-methoxyacetophenone, N-nitrosomethylphenylamine, and the tobacco-specific carcinogen, 4-(methylnitrosamino)-1-(3-pyridyl)-1-butanone. Possesses phenacetin O-deethylation activity.</text>
</comment>
<comment type="catalytic activity">
    <reaction>
        <text>an organic molecule + reduced [NADPH--hemoprotein reductase] + O2 = an alcohol + oxidized [NADPH--hemoprotein reductase] + H2O + H(+)</text>
        <dbReference type="Rhea" id="RHEA:17149"/>
        <dbReference type="Rhea" id="RHEA-COMP:11964"/>
        <dbReference type="Rhea" id="RHEA-COMP:11965"/>
        <dbReference type="ChEBI" id="CHEBI:15377"/>
        <dbReference type="ChEBI" id="CHEBI:15378"/>
        <dbReference type="ChEBI" id="CHEBI:15379"/>
        <dbReference type="ChEBI" id="CHEBI:30879"/>
        <dbReference type="ChEBI" id="CHEBI:57618"/>
        <dbReference type="ChEBI" id="CHEBI:58210"/>
        <dbReference type="ChEBI" id="CHEBI:142491"/>
        <dbReference type="EC" id="1.14.14.1"/>
    </reaction>
</comment>
<comment type="cofactor">
    <cofactor>
        <name>heme</name>
        <dbReference type="ChEBI" id="CHEBI:30413"/>
    </cofactor>
</comment>
<comment type="biophysicochemical properties">
    <kinetics>
        <KM evidence="6">10.7 uM for phenacetin</KM>
    </kinetics>
</comment>
<comment type="subcellular location">
    <subcellularLocation>
        <location>Endoplasmic reticulum membrane</location>
        <topology>Peripheral membrane protein</topology>
    </subcellularLocation>
    <subcellularLocation>
        <location>Microsome membrane</location>
        <topology>Peripheral membrane protein</topology>
    </subcellularLocation>
</comment>
<comment type="tissue specificity">
    <text evidence="1">Expressed in liver and a number of extrahepatic tissues, including nasal mucosa, lung, trachea, brain, mammary gland, prostate, testis, and uterus, but not in heart, kidney, bone marrow, colon, small intestine, spleen, stomach, thymus, or skeletal muscle.</text>
</comment>
<comment type="polymorphism">
    <text>The frequencies of the Cys-257 allele in white, black, Hispanic, and Asian individuals are 1.9%, 14.4%, 5.8%, and 7.7%, respectively. The Cys-257 variant is 37 to 56% less active than the wild-type Arg-257 protein toward all substrates tested.</text>
</comment>
<comment type="similarity">
    <text evidence="7">Belongs to the cytochrome P450 family.</text>
</comment>
<comment type="online information" name="PharmVar Pharmacogen Variation Consortium">
    <link uri="https://www.pharmvar.org/gene/CYP2A13"/>
    <text>CYP2A13 alleles</text>
</comment>
<keyword id="KW-0002">3D-structure</keyword>
<keyword id="KW-0256">Endoplasmic reticulum</keyword>
<keyword id="KW-0349">Heme</keyword>
<keyword id="KW-0408">Iron</keyword>
<keyword id="KW-0472">Membrane</keyword>
<keyword id="KW-0479">Metal-binding</keyword>
<keyword id="KW-0492">Microsome</keyword>
<keyword id="KW-0503">Monooxygenase</keyword>
<keyword id="KW-0560">Oxidoreductase</keyword>
<keyword id="KW-1267">Proteomics identification</keyword>
<keyword id="KW-1185">Reference proteome</keyword>
<proteinExistence type="evidence at protein level"/>
<sequence>MLASGLLLVTLLACLTVMVLMSVWRQRKSRGKLPPGPTPLPFIGNYLQLNTEQMYNSLMKISERYGPVFTIHLGPRRVVVLCGHDAVKEALVDQAEEFSGRGEQATFDWLFKGYGVAFSNGERAKQLRRFSIATLRGFGVGKRGIEERIQEEAGFLIDALRGTHGANIDPTFFLSRTVSNVISSIVFGDRFDYEDKEFLSLLRMMLGSFQFTATSTGQLYEMFSSVMKHLPGPQQQAFKELQGLEDFIAKKVEHNQRTLDPNSPRDFIDSFLIRMQEEEKNPNTEFYLKNLVMTTLNLFFAGTETVSTTLRYGFLLLMKHPEVEAKVHEEIDRVIGKNRQPKFEDRAKMPYTEAVIHEIQRFGDMLPMGLAHRVNKDTKFRDFFLPKGTEVFPMLGSVLRDPRFFSNPRDFNPQHFLDKKGQFKKSDAFVPFSIGKRYCFGEGLARMELFLFFTTIMQNFRFKSPQSPKDIDVSPKHVGFATIPRNYTMSFLPR</sequence>
<reference key="1">
    <citation type="journal article" date="1995" name="Am. J. Hum. Genet.">
        <title>A genetic polymorphism in coumarin 7-hydroxylation: sequence of the human CYP2A genes and identification of variant CYP2A6 alleles.</title>
        <authorList>
            <person name="Fernandez-Salguero P."/>
            <person name="Hoffman S.M."/>
            <person name="Cholerton S."/>
            <person name="Mohrenweiser H."/>
            <person name="Raunio H."/>
            <person name="Rautio A."/>
            <person name="Pelkonen O."/>
            <person name="Huang J.D."/>
            <person name="Evans W.E."/>
            <person name="Idle J.R."/>
        </authorList>
    </citation>
    <scope>NUCLEOTIDE SEQUENCE [GENOMIC DNA]</scope>
</reference>
<reference key="2">
    <citation type="journal article" date="2000" name="Cancer Res.">
        <title>Human cytochrome P450 CYP2A13: predominant expression in the respiratory tract and its high efficiency metabolic activation of a tobacco-specific carcinogen, 4-(methylnitrosamino)-1-(3-pyridyl)-1-butanone.</title>
        <authorList>
            <person name="Su T."/>
            <person name="Bao Z."/>
            <person name="Zhang Q.Y."/>
            <person name="Smith T.J."/>
            <person name="Hong J.Y."/>
            <person name="Ding X."/>
        </authorList>
    </citation>
    <scope>NUCLEOTIDE SEQUENCE [MRNA]</scope>
    <scope>CHARACTERIZATION</scope>
    <scope>TISSUE SPECIFICITY</scope>
</reference>
<reference key="3">
    <citation type="journal article" date="2004" name="Biochem. Biophys. Res. Commun.">
        <title>Genetic polymorphism of the human cytochrome CYP2A13 in a French population: implication in lung cancer susceptibility.</title>
        <authorList>
            <person name="Cauffiez C."/>
            <person name="Lo-Guidice J.-M."/>
            <person name="Quaranta S."/>
            <person name="Allorge D."/>
            <person name="Chevalier D."/>
            <person name="Cenee S."/>
            <person name="Hamdan R."/>
            <person name="Lhermitte M."/>
            <person name="Lafitte J.-J."/>
            <person name="Libersa C."/>
            <person name="Colombel J.-F."/>
            <person name="Stuecker I."/>
            <person name="Broly F."/>
        </authorList>
    </citation>
    <scope>NUCLEOTIDE SEQUENCE [MRNA]</scope>
    <scope>VARIANTS GLU-158 AND LEU-323</scope>
</reference>
<reference key="4">
    <citation type="journal article" date="2008" name="Drug Metab. Dispos.">
        <title>Key residues controlling phenacetin metabolism by human cytochrome P450 2A enzymes.</title>
        <authorList>
            <person name="DeVore N.M."/>
            <person name="Smith B.D."/>
            <person name="Urban M.J."/>
            <person name="Scott E.E."/>
        </authorList>
    </citation>
    <scope>FUNCTION</scope>
    <scope>BIOPHYSICOCHEMICAL PROPERTIES</scope>
    <scope>MUTAGENESIS OF LEU-110; ALA-117; SER-208; ALA-213; PHE-300; ALA-301; MET-365; LEU-366; GLY-369 AND HIS-372</scope>
</reference>
<reference key="5">
    <citation type="journal article" date="2007" name="Arch. Biochem. Biophys.">
        <title>Structural insight into the altered substrate specificity of human cytochrome P450 2A6 mutants.</title>
        <authorList>
            <person name="Sansen S."/>
            <person name="Hsu M.H."/>
            <person name="Stout C.D."/>
            <person name="Johnson E.F."/>
        </authorList>
    </citation>
    <scope>X-RAY CRYSTALLOGRAPHY (1.95 ANGSTROMS) OF 29-494 IN COMPLEX WITH HEME</scope>
</reference>
<reference key="6">
    <citation type="journal article" date="2007" name="J. Biol. Chem.">
        <title>Structure of the human lung cytochrome P450 2A13.</title>
        <authorList>
            <person name="Smith B.D."/>
            <person name="Sanders J.L."/>
            <person name="Porubsky P.R."/>
            <person name="Lushington G.H."/>
            <person name="Stout C.D."/>
            <person name="Scott E.E."/>
        </authorList>
    </citation>
    <scope>X-RAY CRYSTALLOGRAPHY (2.35 ANGSTROMS) OF 31-494 IN COMPLEX WITH SUBSTRATE ANALOG AND HEME</scope>
</reference>
<reference key="7">
    <citation type="journal article" date="2002" name="J. Pharmacol. Exp. Ther.">
        <title>Genetic polymorphisms of the human CYP2A13 gene: identification of single-nucleotide polymorphisms and functional characterization of an Arg257Cys variant.</title>
        <authorList>
            <person name="Zhang X."/>
            <person name="Su T."/>
            <person name="Zhang Q.Y."/>
            <person name="Gu J."/>
            <person name="Caggana M."/>
            <person name="Li H."/>
            <person name="Ding X."/>
        </authorList>
    </citation>
    <scope>VARIANT CYS-257</scope>
</reference>
<reference key="8">
    <citation type="journal article" date="2003" name="Drug Metab. Pharmacokinet.">
        <title>Eighteen novel polymorphisms of the CYP2A13 gene in Japanese.</title>
        <authorList>
            <person name="Fujieda M."/>
            <person name="Yamazaki H."/>
            <person name="Kiyotani K."/>
            <person name="Muroi A."/>
            <person name="Kunitoh H."/>
            <person name="Dosaka-Akita H."/>
            <person name="Sawamura Y."/>
            <person name="Kamataki T."/>
        </authorList>
    </citation>
    <scope>VARIANTS GLN-25; GLN-101; THR-134 INS; GLU-158; TYR-453 AND CYS-494</scope>
</reference>
<reference key="9">
    <citation type="journal article" date="2003" name="J. Hum. Genet.">
        <title>Catalog of 680 variations among eight cytochrome p450 (CYP) genes, nine esterase genes, and two other genes in the Japanese population.</title>
        <authorList>
            <person name="Saito S."/>
            <person name="Iida A."/>
            <person name="Sekine A."/>
            <person name="Kawauchi S."/>
            <person name="Higuchi S."/>
            <person name="Ogawa C."/>
            <person name="Nakamura Y."/>
        </authorList>
    </citation>
    <scope>VARIANTS GLN-25 AND CYS-257</scope>
</reference>
<name>CP2AD_HUMAN</name>
<evidence type="ECO:0000269" key="1">
    <source>
    </source>
</evidence>
<evidence type="ECO:0000269" key="2">
    <source>
    </source>
</evidence>
<evidence type="ECO:0000269" key="3">
    <source>
    </source>
</evidence>
<evidence type="ECO:0000269" key="4">
    <source>
    </source>
</evidence>
<evidence type="ECO:0000269" key="5">
    <source>
    </source>
</evidence>
<evidence type="ECO:0000269" key="6">
    <source>
    </source>
</evidence>
<evidence type="ECO:0000305" key="7"/>
<evidence type="ECO:0007829" key="8">
    <source>
        <dbReference type="PDB" id="2P85"/>
    </source>
</evidence>
<evidence type="ECO:0007829" key="9">
    <source>
        <dbReference type="PDB" id="2PG5"/>
    </source>
</evidence>
<evidence type="ECO:0007829" key="10">
    <source>
        <dbReference type="PDB" id="4EJH"/>
    </source>
</evidence>
<protein>
    <recommendedName>
        <fullName>Cytochrome P450 2A13</fullName>
        <ecNumber>1.14.14.1</ecNumber>
    </recommendedName>
    <alternativeName>
        <fullName>CYPIIA13</fullName>
    </alternativeName>
</protein>
<organism>
    <name type="scientific">Homo sapiens</name>
    <name type="common">Human</name>
    <dbReference type="NCBI Taxonomy" id="9606"/>
    <lineage>
        <taxon>Eukaryota</taxon>
        <taxon>Metazoa</taxon>
        <taxon>Chordata</taxon>
        <taxon>Craniata</taxon>
        <taxon>Vertebrata</taxon>
        <taxon>Euteleostomi</taxon>
        <taxon>Mammalia</taxon>
        <taxon>Eutheria</taxon>
        <taxon>Euarchontoglires</taxon>
        <taxon>Primates</taxon>
        <taxon>Haplorrhini</taxon>
        <taxon>Catarrhini</taxon>
        <taxon>Hominidae</taxon>
        <taxon>Homo</taxon>
    </lineage>
</organism>